<comment type="function">
    <text evidence="1">Located at the top of the head of the 30S subunit, it contacts several helices of the 16S rRNA. In the 70S ribosome it contacts the 23S rRNA (bridge B1a) and protein L5 of the 50S subunit (bridge B1b), connecting the 2 subunits; these bridges are implicated in subunit movement. Contacts the tRNAs in the A and P-sites.</text>
</comment>
<comment type="subunit">
    <text evidence="1">Part of the 30S ribosomal subunit. Forms a loose heterodimer with protein S19. Forms two bridges to the 50S subunit in the 70S ribosome.</text>
</comment>
<comment type="similarity">
    <text evidence="1">Belongs to the universal ribosomal protein uS13 family.</text>
</comment>
<keyword id="KW-0687">Ribonucleoprotein</keyword>
<keyword id="KW-0689">Ribosomal protein</keyword>
<keyword id="KW-0694">RNA-binding</keyword>
<keyword id="KW-0699">rRNA-binding</keyword>
<keyword id="KW-0820">tRNA-binding</keyword>
<proteinExistence type="inferred from homology"/>
<gene>
    <name evidence="1" type="primary">rpsM</name>
    <name type="ordered locus">GTNG_0129</name>
</gene>
<name>RS13_GEOTN</name>
<organism>
    <name type="scientific">Geobacillus thermodenitrificans (strain NG80-2)</name>
    <dbReference type="NCBI Taxonomy" id="420246"/>
    <lineage>
        <taxon>Bacteria</taxon>
        <taxon>Bacillati</taxon>
        <taxon>Bacillota</taxon>
        <taxon>Bacilli</taxon>
        <taxon>Bacillales</taxon>
        <taxon>Anoxybacillaceae</taxon>
        <taxon>Geobacillus</taxon>
    </lineage>
</organism>
<sequence>MARIAGVDIPRDKRVVISLTYIYGIGKPTAQKILKEAGVSEDTRVRDLTEEELGRIREIVGRLKVEGDLRREVSLNIKRLMEIGCYRGLRHRRGLPVRGQNTKNNARTRKGPRRTVANKKK</sequence>
<protein>
    <recommendedName>
        <fullName evidence="1">Small ribosomal subunit protein uS13</fullName>
    </recommendedName>
    <alternativeName>
        <fullName evidence="3">30S ribosomal protein S13</fullName>
    </alternativeName>
</protein>
<feature type="chain" id="PRO_0000306611" description="Small ribosomal subunit protein uS13">
    <location>
        <begin position="1"/>
        <end position="121"/>
    </location>
</feature>
<feature type="region of interest" description="Disordered" evidence="2">
    <location>
        <begin position="94"/>
        <end position="121"/>
    </location>
</feature>
<feature type="compositionally biased region" description="Basic residues" evidence="2">
    <location>
        <begin position="106"/>
        <end position="121"/>
    </location>
</feature>
<accession>A4IJL2</accession>
<dbReference type="EMBL" id="CP000557">
    <property type="protein sequence ID" value="ABO65516.1"/>
    <property type="molecule type" value="Genomic_DNA"/>
</dbReference>
<dbReference type="RefSeq" id="WP_008881920.1">
    <property type="nucleotide sequence ID" value="NC_009328.1"/>
</dbReference>
<dbReference type="SMR" id="A4IJL2"/>
<dbReference type="GeneID" id="89612875"/>
<dbReference type="KEGG" id="gtn:GTNG_0129"/>
<dbReference type="eggNOG" id="COG0099">
    <property type="taxonomic scope" value="Bacteria"/>
</dbReference>
<dbReference type="HOGENOM" id="CLU_103849_1_1_9"/>
<dbReference type="Proteomes" id="UP000001578">
    <property type="component" value="Chromosome"/>
</dbReference>
<dbReference type="GO" id="GO:0005829">
    <property type="term" value="C:cytosol"/>
    <property type="evidence" value="ECO:0007669"/>
    <property type="project" value="TreeGrafter"/>
</dbReference>
<dbReference type="GO" id="GO:0015935">
    <property type="term" value="C:small ribosomal subunit"/>
    <property type="evidence" value="ECO:0007669"/>
    <property type="project" value="TreeGrafter"/>
</dbReference>
<dbReference type="GO" id="GO:0019843">
    <property type="term" value="F:rRNA binding"/>
    <property type="evidence" value="ECO:0007669"/>
    <property type="project" value="UniProtKB-UniRule"/>
</dbReference>
<dbReference type="GO" id="GO:0003735">
    <property type="term" value="F:structural constituent of ribosome"/>
    <property type="evidence" value="ECO:0007669"/>
    <property type="project" value="InterPro"/>
</dbReference>
<dbReference type="GO" id="GO:0000049">
    <property type="term" value="F:tRNA binding"/>
    <property type="evidence" value="ECO:0007669"/>
    <property type="project" value="UniProtKB-UniRule"/>
</dbReference>
<dbReference type="GO" id="GO:0006412">
    <property type="term" value="P:translation"/>
    <property type="evidence" value="ECO:0007669"/>
    <property type="project" value="UniProtKB-UniRule"/>
</dbReference>
<dbReference type="FunFam" id="1.10.8.50:FF:000001">
    <property type="entry name" value="30S ribosomal protein S13"/>
    <property type="match status" value="1"/>
</dbReference>
<dbReference type="FunFam" id="4.10.910.10:FF:000001">
    <property type="entry name" value="30S ribosomal protein S13"/>
    <property type="match status" value="1"/>
</dbReference>
<dbReference type="Gene3D" id="1.10.8.50">
    <property type="match status" value="1"/>
</dbReference>
<dbReference type="Gene3D" id="4.10.910.10">
    <property type="entry name" value="30s ribosomal protein s13, domain 2"/>
    <property type="match status" value="1"/>
</dbReference>
<dbReference type="HAMAP" id="MF_01315">
    <property type="entry name" value="Ribosomal_uS13"/>
    <property type="match status" value="1"/>
</dbReference>
<dbReference type="InterPro" id="IPR027437">
    <property type="entry name" value="Rbsml_uS13_C"/>
</dbReference>
<dbReference type="InterPro" id="IPR001892">
    <property type="entry name" value="Ribosomal_uS13"/>
</dbReference>
<dbReference type="InterPro" id="IPR010979">
    <property type="entry name" value="Ribosomal_uS13-like_H2TH"/>
</dbReference>
<dbReference type="InterPro" id="IPR019980">
    <property type="entry name" value="Ribosomal_uS13_bac-type"/>
</dbReference>
<dbReference type="InterPro" id="IPR018269">
    <property type="entry name" value="Ribosomal_uS13_CS"/>
</dbReference>
<dbReference type="NCBIfam" id="TIGR03631">
    <property type="entry name" value="uS13_bact"/>
    <property type="match status" value="1"/>
</dbReference>
<dbReference type="PANTHER" id="PTHR10871">
    <property type="entry name" value="30S RIBOSOMAL PROTEIN S13/40S RIBOSOMAL PROTEIN S18"/>
    <property type="match status" value="1"/>
</dbReference>
<dbReference type="PANTHER" id="PTHR10871:SF1">
    <property type="entry name" value="SMALL RIBOSOMAL SUBUNIT PROTEIN US13M"/>
    <property type="match status" value="1"/>
</dbReference>
<dbReference type="Pfam" id="PF00416">
    <property type="entry name" value="Ribosomal_S13"/>
    <property type="match status" value="1"/>
</dbReference>
<dbReference type="PIRSF" id="PIRSF002134">
    <property type="entry name" value="Ribosomal_S13"/>
    <property type="match status" value="1"/>
</dbReference>
<dbReference type="SUPFAM" id="SSF46946">
    <property type="entry name" value="S13-like H2TH domain"/>
    <property type="match status" value="1"/>
</dbReference>
<dbReference type="PROSITE" id="PS00646">
    <property type="entry name" value="RIBOSOMAL_S13_1"/>
    <property type="match status" value="1"/>
</dbReference>
<dbReference type="PROSITE" id="PS50159">
    <property type="entry name" value="RIBOSOMAL_S13_2"/>
    <property type="match status" value="1"/>
</dbReference>
<evidence type="ECO:0000255" key="1">
    <source>
        <dbReference type="HAMAP-Rule" id="MF_01315"/>
    </source>
</evidence>
<evidence type="ECO:0000256" key="2">
    <source>
        <dbReference type="SAM" id="MobiDB-lite"/>
    </source>
</evidence>
<evidence type="ECO:0000305" key="3"/>
<reference key="1">
    <citation type="journal article" date="2007" name="Proc. Natl. Acad. Sci. U.S.A.">
        <title>Genome and proteome of long-chain alkane degrading Geobacillus thermodenitrificans NG80-2 isolated from a deep-subsurface oil reservoir.</title>
        <authorList>
            <person name="Feng L."/>
            <person name="Wang W."/>
            <person name="Cheng J."/>
            <person name="Ren Y."/>
            <person name="Zhao G."/>
            <person name="Gao C."/>
            <person name="Tang Y."/>
            <person name="Liu X."/>
            <person name="Han W."/>
            <person name="Peng X."/>
            <person name="Liu R."/>
            <person name="Wang L."/>
        </authorList>
    </citation>
    <scope>NUCLEOTIDE SEQUENCE [LARGE SCALE GENOMIC DNA]</scope>
    <source>
        <strain>NG80-2</strain>
    </source>
</reference>